<feature type="chain" id="PRO_0000136255" description="Histidine--tRNA ligase">
    <location>
        <begin position="1"/>
        <end position="420"/>
    </location>
</feature>
<feature type="disulfide bond" evidence="1">
    <location>
        <begin position="191"/>
        <end position="194"/>
    </location>
</feature>
<reference key="1">
    <citation type="journal article" date="2001" name="Lancet">
        <title>Whole genome sequencing of meticillin-resistant Staphylococcus aureus.</title>
        <authorList>
            <person name="Kuroda M."/>
            <person name="Ohta T."/>
            <person name="Uchiyama I."/>
            <person name="Baba T."/>
            <person name="Yuzawa H."/>
            <person name="Kobayashi I."/>
            <person name="Cui L."/>
            <person name="Oguchi A."/>
            <person name="Aoki K."/>
            <person name="Nagai Y."/>
            <person name="Lian J.-Q."/>
            <person name="Ito T."/>
            <person name="Kanamori M."/>
            <person name="Matsumaru H."/>
            <person name="Maruyama A."/>
            <person name="Murakami H."/>
            <person name="Hosoyama A."/>
            <person name="Mizutani-Ui Y."/>
            <person name="Takahashi N.K."/>
            <person name="Sawano T."/>
            <person name="Inoue R."/>
            <person name="Kaito C."/>
            <person name="Sekimizu K."/>
            <person name="Hirakawa H."/>
            <person name="Kuhara S."/>
            <person name="Goto S."/>
            <person name="Yabuzaki J."/>
            <person name="Kanehisa M."/>
            <person name="Yamashita A."/>
            <person name="Oshima K."/>
            <person name="Furuya K."/>
            <person name="Yoshino C."/>
            <person name="Shiba T."/>
            <person name="Hattori M."/>
            <person name="Ogasawara N."/>
            <person name="Hayashi H."/>
            <person name="Hiramatsu K."/>
        </authorList>
    </citation>
    <scope>NUCLEOTIDE SEQUENCE [LARGE SCALE GENOMIC DNA]</scope>
    <source>
        <strain>N315</strain>
    </source>
</reference>
<reference key="2">
    <citation type="submission" date="2007-10" db="UniProtKB">
        <title>Shotgun proteomic analysis of total and membrane protein extracts of S. aureus strain N315.</title>
        <authorList>
            <person name="Vaezzadeh A.R."/>
            <person name="Deshusses J."/>
            <person name="Lescuyer P."/>
            <person name="Hochstrasser D.F."/>
        </authorList>
    </citation>
    <scope>IDENTIFICATION BY MASS SPECTROMETRY [LARGE SCALE ANALYSIS]</scope>
    <source>
        <strain>N315</strain>
    </source>
</reference>
<comment type="catalytic activity">
    <reaction>
        <text>tRNA(His) + L-histidine + ATP = L-histidyl-tRNA(His) + AMP + diphosphate + H(+)</text>
        <dbReference type="Rhea" id="RHEA:17313"/>
        <dbReference type="Rhea" id="RHEA-COMP:9665"/>
        <dbReference type="Rhea" id="RHEA-COMP:9689"/>
        <dbReference type="ChEBI" id="CHEBI:15378"/>
        <dbReference type="ChEBI" id="CHEBI:30616"/>
        <dbReference type="ChEBI" id="CHEBI:33019"/>
        <dbReference type="ChEBI" id="CHEBI:57595"/>
        <dbReference type="ChEBI" id="CHEBI:78442"/>
        <dbReference type="ChEBI" id="CHEBI:78527"/>
        <dbReference type="ChEBI" id="CHEBI:456215"/>
        <dbReference type="EC" id="6.1.1.21"/>
    </reaction>
</comment>
<comment type="subunit">
    <text evidence="1">Homodimer.</text>
</comment>
<comment type="subcellular location">
    <subcellularLocation>
        <location evidence="1">Cytoplasm</location>
    </subcellularLocation>
</comment>
<comment type="similarity">
    <text evidence="2">Belongs to the class-II aminoacyl-tRNA synthetase family.</text>
</comment>
<sequence>MIKIPRGTQDILPEDSKKWRYIENQLDELMTFYNYKEIRTPIFESTDLFARGVGDSTDVVQKEMYTFKDKGDRSITLRPEGTAAVVRSYIEHKMQGNPNQPIKLYYNGPMFRYERKQKGRYRQFNQFGVEAIGAENPSVDAEVLAMVMHIYQSFGLKHLKLVINSVGDMASRKEYNEALVKHFEPVIHEFCSDCQSRLHTNPMRILDCKVDRDKEAIKTAPRITDFLNEESKAYYEQVKAYLDDLGIPYIEDPNLVRGLDYYTHTAFELMMDNPNYDGAITTLCGGGRYNGLLELLDGPSETGIGFALSIERLLLALEEEGIELDIEENLDLFIVTMGDQADRYAVKLLNHLRHNGIKADKDYLQRKIKGQMKQADRLGAKFTIVIGDQELENNKIDVKNMTTGESETIELDALVEYFKK</sequence>
<keyword id="KW-0030">Aminoacyl-tRNA synthetase</keyword>
<keyword id="KW-0067">ATP-binding</keyword>
<keyword id="KW-0963">Cytoplasm</keyword>
<keyword id="KW-1015">Disulfide bond</keyword>
<keyword id="KW-0436">Ligase</keyword>
<keyword id="KW-0547">Nucleotide-binding</keyword>
<keyword id="KW-0648">Protein biosynthesis</keyword>
<evidence type="ECO:0000250" key="1"/>
<evidence type="ECO:0000305" key="2"/>
<accession>P60910</accession>
<accession>O32422</accession>
<name>SYH_STAAN</name>
<proteinExistence type="evidence at protein level"/>
<protein>
    <recommendedName>
        <fullName>Histidine--tRNA ligase</fullName>
        <ecNumber>6.1.1.21</ecNumber>
    </recommendedName>
    <alternativeName>
        <fullName>Histidyl-tRNA synthetase</fullName>
        <shortName>HisRS</shortName>
    </alternativeName>
</protein>
<organism>
    <name type="scientific">Staphylococcus aureus (strain N315)</name>
    <dbReference type="NCBI Taxonomy" id="158879"/>
    <lineage>
        <taxon>Bacteria</taxon>
        <taxon>Bacillati</taxon>
        <taxon>Bacillota</taxon>
        <taxon>Bacilli</taxon>
        <taxon>Bacillales</taxon>
        <taxon>Staphylococcaceae</taxon>
        <taxon>Staphylococcus</taxon>
    </lineage>
</organism>
<dbReference type="EC" id="6.1.1.21"/>
<dbReference type="EMBL" id="BA000018">
    <property type="protein sequence ID" value="BAB42723.1"/>
    <property type="molecule type" value="Genomic_DNA"/>
</dbReference>
<dbReference type="PIR" id="F89945">
    <property type="entry name" value="F89945"/>
</dbReference>
<dbReference type="RefSeq" id="WP_000590826.1">
    <property type="nucleotide sequence ID" value="NC_002745.2"/>
</dbReference>
<dbReference type="SMR" id="P60910"/>
<dbReference type="EnsemblBacteria" id="BAB42723">
    <property type="protein sequence ID" value="BAB42723"/>
    <property type="gene ID" value="BAB42723"/>
</dbReference>
<dbReference type="KEGG" id="sau:SA1457"/>
<dbReference type="HOGENOM" id="CLU_025113_1_1_9"/>
<dbReference type="GO" id="GO:0005737">
    <property type="term" value="C:cytoplasm"/>
    <property type="evidence" value="ECO:0007669"/>
    <property type="project" value="UniProtKB-SubCell"/>
</dbReference>
<dbReference type="GO" id="GO:0005524">
    <property type="term" value="F:ATP binding"/>
    <property type="evidence" value="ECO:0007669"/>
    <property type="project" value="UniProtKB-UniRule"/>
</dbReference>
<dbReference type="GO" id="GO:0140096">
    <property type="term" value="F:catalytic activity, acting on a protein"/>
    <property type="evidence" value="ECO:0007669"/>
    <property type="project" value="UniProtKB-ARBA"/>
</dbReference>
<dbReference type="GO" id="GO:0004821">
    <property type="term" value="F:histidine-tRNA ligase activity"/>
    <property type="evidence" value="ECO:0007669"/>
    <property type="project" value="UniProtKB-UniRule"/>
</dbReference>
<dbReference type="GO" id="GO:0016740">
    <property type="term" value="F:transferase activity"/>
    <property type="evidence" value="ECO:0007669"/>
    <property type="project" value="UniProtKB-ARBA"/>
</dbReference>
<dbReference type="GO" id="GO:0006427">
    <property type="term" value="P:histidyl-tRNA aminoacylation"/>
    <property type="evidence" value="ECO:0007669"/>
    <property type="project" value="UniProtKB-UniRule"/>
</dbReference>
<dbReference type="CDD" id="cd00738">
    <property type="entry name" value="HGTP_anticodon"/>
    <property type="match status" value="1"/>
</dbReference>
<dbReference type="CDD" id="cd00773">
    <property type="entry name" value="HisRS-like_core"/>
    <property type="match status" value="1"/>
</dbReference>
<dbReference type="FunFam" id="3.30.930.10:FF:000005">
    <property type="entry name" value="Histidine--tRNA ligase"/>
    <property type="match status" value="1"/>
</dbReference>
<dbReference type="Gene3D" id="3.40.50.800">
    <property type="entry name" value="Anticodon-binding domain"/>
    <property type="match status" value="1"/>
</dbReference>
<dbReference type="Gene3D" id="3.30.930.10">
    <property type="entry name" value="Bira Bifunctional Protein, Domain 2"/>
    <property type="match status" value="1"/>
</dbReference>
<dbReference type="HAMAP" id="MF_00127">
    <property type="entry name" value="His_tRNA_synth"/>
    <property type="match status" value="1"/>
</dbReference>
<dbReference type="InterPro" id="IPR006195">
    <property type="entry name" value="aa-tRNA-synth_II"/>
</dbReference>
<dbReference type="InterPro" id="IPR045864">
    <property type="entry name" value="aa-tRNA-synth_II/BPL/LPL"/>
</dbReference>
<dbReference type="InterPro" id="IPR004154">
    <property type="entry name" value="Anticodon-bd"/>
</dbReference>
<dbReference type="InterPro" id="IPR036621">
    <property type="entry name" value="Anticodon-bd_dom_sf"/>
</dbReference>
<dbReference type="InterPro" id="IPR015807">
    <property type="entry name" value="His-tRNA-ligase"/>
</dbReference>
<dbReference type="InterPro" id="IPR041715">
    <property type="entry name" value="HisRS-like_core"/>
</dbReference>
<dbReference type="InterPro" id="IPR004516">
    <property type="entry name" value="HisRS/HisZ"/>
</dbReference>
<dbReference type="NCBIfam" id="TIGR00442">
    <property type="entry name" value="hisS"/>
    <property type="match status" value="1"/>
</dbReference>
<dbReference type="PANTHER" id="PTHR43707:SF1">
    <property type="entry name" value="HISTIDINE--TRNA LIGASE, MITOCHONDRIAL-RELATED"/>
    <property type="match status" value="1"/>
</dbReference>
<dbReference type="PANTHER" id="PTHR43707">
    <property type="entry name" value="HISTIDYL-TRNA SYNTHETASE"/>
    <property type="match status" value="1"/>
</dbReference>
<dbReference type="Pfam" id="PF03129">
    <property type="entry name" value="HGTP_anticodon"/>
    <property type="match status" value="1"/>
</dbReference>
<dbReference type="Pfam" id="PF13393">
    <property type="entry name" value="tRNA-synt_His"/>
    <property type="match status" value="1"/>
</dbReference>
<dbReference type="PIRSF" id="PIRSF001549">
    <property type="entry name" value="His-tRNA_synth"/>
    <property type="match status" value="1"/>
</dbReference>
<dbReference type="SUPFAM" id="SSF52954">
    <property type="entry name" value="Class II aaRS ABD-related"/>
    <property type="match status" value="1"/>
</dbReference>
<dbReference type="SUPFAM" id="SSF55681">
    <property type="entry name" value="Class II aaRS and biotin synthetases"/>
    <property type="match status" value="1"/>
</dbReference>
<dbReference type="PROSITE" id="PS50862">
    <property type="entry name" value="AA_TRNA_LIGASE_II"/>
    <property type="match status" value="1"/>
</dbReference>
<gene>
    <name type="primary">hisS</name>
    <name type="ordered locus">SA1457</name>
</gene>